<organism>
    <name type="scientific">Escherichia coli O157:H7 (strain EC4115 / EHEC)</name>
    <dbReference type="NCBI Taxonomy" id="444450"/>
    <lineage>
        <taxon>Bacteria</taxon>
        <taxon>Pseudomonadati</taxon>
        <taxon>Pseudomonadota</taxon>
        <taxon>Gammaproteobacteria</taxon>
        <taxon>Enterobacterales</taxon>
        <taxon>Enterobacteriaceae</taxon>
        <taxon>Escherichia</taxon>
    </lineage>
</organism>
<feature type="chain" id="PRO_1000128840" description="Adenosine deaminase">
    <location>
        <begin position="1"/>
        <end position="333"/>
    </location>
</feature>
<feature type="active site" description="Proton donor" evidence="1">
    <location>
        <position position="200"/>
    </location>
</feature>
<feature type="binding site" evidence="1">
    <location>
        <position position="12"/>
    </location>
    <ligand>
        <name>Zn(2+)</name>
        <dbReference type="ChEBI" id="CHEBI:29105"/>
        <note>catalytic</note>
    </ligand>
</feature>
<feature type="binding site" evidence="1">
    <location>
        <position position="14"/>
    </location>
    <ligand>
        <name>substrate</name>
    </ligand>
</feature>
<feature type="binding site" evidence="1">
    <location>
        <position position="14"/>
    </location>
    <ligand>
        <name>Zn(2+)</name>
        <dbReference type="ChEBI" id="CHEBI:29105"/>
        <note>catalytic</note>
    </ligand>
</feature>
<feature type="binding site" evidence="1">
    <location>
        <position position="16"/>
    </location>
    <ligand>
        <name>substrate</name>
    </ligand>
</feature>
<feature type="binding site" evidence="1">
    <location>
        <position position="170"/>
    </location>
    <ligand>
        <name>substrate</name>
    </ligand>
</feature>
<feature type="binding site" evidence="1">
    <location>
        <position position="197"/>
    </location>
    <ligand>
        <name>Zn(2+)</name>
        <dbReference type="ChEBI" id="CHEBI:29105"/>
        <note>catalytic</note>
    </ligand>
</feature>
<feature type="binding site" evidence="1">
    <location>
        <position position="278"/>
    </location>
    <ligand>
        <name>Zn(2+)</name>
        <dbReference type="ChEBI" id="CHEBI:29105"/>
        <note>catalytic</note>
    </ligand>
</feature>
<feature type="binding site" evidence="1">
    <location>
        <position position="279"/>
    </location>
    <ligand>
        <name>substrate</name>
    </ligand>
</feature>
<feature type="site" description="Important for catalytic activity" evidence="1">
    <location>
        <position position="221"/>
    </location>
</feature>
<dbReference type="EC" id="3.5.4.4" evidence="1"/>
<dbReference type="EMBL" id="CP001164">
    <property type="protein sequence ID" value="ACI34682.1"/>
    <property type="molecule type" value="Genomic_DNA"/>
</dbReference>
<dbReference type="RefSeq" id="WP_000567512.1">
    <property type="nucleotide sequence ID" value="NC_011353.1"/>
</dbReference>
<dbReference type="SMR" id="B5Z457"/>
<dbReference type="KEGG" id="ecf:ECH74115_2335"/>
<dbReference type="HOGENOM" id="CLU_039228_0_2_6"/>
<dbReference type="GO" id="GO:0005829">
    <property type="term" value="C:cytosol"/>
    <property type="evidence" value="ECO:0007669"/>
    <property type="project" value="TreeGrafter"/>
</dbReference>
<dbReference type="GO" id="GO:0046936">
    <property type="term" value="F:2'-deoxyadenosine deaminase activity"/>
    <property type="evidence" value="ECO:0007669"/>
    <property type="project" value="RHEA"/>
</dbReference>
<dbReference type="GO" id="GO:0004000">
    <property type="term" value="F:adenosine deaminase activity"/>
    <property type="evidence" value="ECO:0007669"/>
    <property type="project" value="UniProtKB-UniRule"/>
</dbReference>
<dbReference type="GO" id="GO:0008270">
    <property type="term" value="F:zinc ion binding"/>
    <property type="evidence" value="ECO:0007669"/>
    <property type="project" value="UniProtKB-UniRule"/>
</dbReference>
<dbReference type="GO" id="GO:0006154">
    <property type="term" value="P:adenosine catabolic process"/>
    <property type="evidence" value="ECO:0007669"/>
    <property type="project" value="TreeGrafter"/>
</dbReference>
<dbReference type="GO" id="GO:0043103">
    <property type="term" value="P:hypoxanthine salvage"/>
    <property type="evidence" value="ECO:0007669"/>
    <property type="project" value="TreeGrafter"/>
</dbReference>
<dbReference type="GO" id="GO:0046103">
    <property type="term" value="P:inosine biosynthetic process"/>
    <property type="evidence" value="ECO:0007669"/>
    <property type="project" value="TreeGrafter"/>
</dbReference>
<dbReference type="GO" id="GO:0009117">
    <property type="term" value="P:nucleotide metabolic process"/>
    <property type="evidence" value="ECO:0007669"/>
    <property type="project" value="UniProtKB-KW"/>
</dbReference>
<dbReference type="GO" id="GO:0009168">
    <property type="term" value="P:purine ribonucleoside monophosphate biosynthetic process"/>
    <property type="evidence" value="ECO:0007669"/>
    <property type="project" value="UniProtKB-UniRule"/>
</dbReference>
<dbReference type="CDD" id="cd01320">
    <property type="entry name" value="ADA"/>
    <property type="match status" value="1"/>
</dbReference>
<dbReference type="FunFam" id="3.20.20.140:FF:000009">
    <property type="entry name" value="Adenosine deaminase"/>
    <property type="match status" value="1"/>
</dbReference>
<dbReference type="Gene3D" id="3.20.20.140">
    <property type="entry name" value="Metal-dependent hydrolases"/>
    <property type="match status" value="1"/>
</dbReference>
<dbReference type="HAMAP" id="MF_00540">
    <property type="entry name" value="A_deaminase"/>
    <property type="match status" value="1"/>
</dbReference>
<dbReference type="InterPro" id="IPR006650">
    <property type="entry name" value="A/AMP_deam_AS"/>
</dbReference>
<dbReference type="InterPro" id="IPR028893">
    <property type="entry name" value="A_deaminase"/>
</dbReference>
<dbReference type="InterPro" id="IPR001365">
    <property type="entry name" value="A_deaminase_dom"/>
</dbReference>
<dbReference type="InterPro" id="IPR006330">
    <property type="entry name" value="Ado/ade_deaminase"/>
</dbReference>
<dbReference type="InterPro" id="IPR032466">
    <property type="entry name" value="Metal_Hydrolase"/>
</dbReference>
<dbReference type="NCBIfam" id="TIGR01430">
    <property type="entry name" value="aden_deam"/>
    <property type="match status" value="1"/>
</dbReference>
<dbReference type="NCBIfam" id="NF006846">
    <property type="entry name" value="PRK09358.1-1"/>
    <property type="match status" value="1"/>
</dbReference>
<dbReference type="PANTHER" id="PTHR11409">
    <property type="entry name" value="ADENOSINE DEAMINASE"/>
    <property type="match status" value="1"/>
</dbReference>
<dbReference type="PANTHER" id="PTHR11409:SF43">
    <property type="entry name" value="ADENOSINE DEAMINASE"/>
    <property type="match status" value="1"/>
</dbReference>
<dbReference type="Pfam" id="PF00962">
    <property type="entry name" value="A_deaminase"/>
    <property type="match status" value="1"/>
</dbReference>
<dbReference type="SUPFAM" id="SSF51556">
    <property type="entry name" value="Metallo-dependent hydrolases"/>
    <property type="match status" value="1"/>
</dbReference>
<dbReference type="PROSITE" id="PS00485">
    <property type="entry name" value="A_DEAMINASE"/>
    <property type="match status" value="1"/>
</dbReference>
<name>ADD_ECO5E</name>
<keyword id="KW-0378">Hydrolase</keyword>
<keyword id="KW-0479">Metal-binding</keyword>
<keyword id="KW-0546">Nucleotide metabolism</keyword>
<keyword id="KW-0862">Zinc</keyword>
<reference key="1">
    <citation type="journal article" date="2011" name="Proc. Natl. Acad. Sci. U.S.A.">
        <title>Genomic anatomy of Escherichia coli O157:H7 outbreaks.</title>
        <authorList>
            <person name="Eppinger M."/>
            <person name="Mammel M.K."/>
            <person name="Leclerc J.E."/>
            <person name="Ravel J."/>
            <person name="Cebula T.A."/>
        </authorList>
    </citation>
    <scope>NUCLEOTIDE SEQUENCE [LARGE SCALE GENOMIC DNA]</scope>
    <source>
        <strain>EC4115 / EHEC</strain>
    </source>
</reference>
<evidence type="ECO:0000255" key="1">
    <source>
        <dbReference type="HAMAP-Rule" id="MF_00540"/>
    </source>
</evidence>
<accession>B5Z457</accession>
<proteinExistence type="inferred from homology"/>
<comment type="function">
    <text evidence="1">Catalyzes the hydrolytic deamination of adenosine and 2-deoxyadenosine.</text>
</comment>
<comment type="catalytic activity">
    <reaction evidence="1">
        <text>adenosine + H2O + H(+) = inosine + NH4(+)</text>
        <dbReference type="Rhea" id="RHEA:24408"/>
        <dbReference type="ChEBI" id="CHEBI:15377"/>
        <dbReference type="ChEBI" id="CHEBI:15378"/>
        <dbReference type="ChEBI" id="CHEBI:16335"/>
        <dbReference type="ChEBI" id="CHEBI:17596"/>
        <dbReference type="ChEBI" id="CHEBI:28938"/>
        <dbReference type="EC" id="3.5.4.4"/>
    </reaction>
    <physiologicalReaction direction="left-to-right" evidence="1">
        <dbReference type="Rhea" id="RHEA:24409"/>
    </physiologicalReaction>
</comment>
<comment type="catalytic activity">
    <reaction evidence="1">
        <text>2'-deoxyadenosine + H2O + H(+) = 2'-deoxyinosine + NH4(+)</text>
        <dbReference type="Rhea" id="RHEA:28190"/>
        <dbReference type="ChEBI" id="CHEBI:15377"/>
        <dbReference type="ChEBI" id="CHEBI:15378"/>
        <dbReference type="ChEBI" id="CHEBI:17256"/>
        <dbReference type="ChEBI" id="CHEBI:28938"/>
        <dbReference type="ChEBI" id="CHEBI:28997"/>
        <dbReference type="EC" id="3.5.4.4"/>
    </reaction>
    <physiologicalReaction direction="left-to-right" evidence="1">
        <dbReference type="Rhea" id="RHEA:28191"/>
    </physiologicalReaction>
</comment>
<comment type="cofactor">
    <cofactor evidence="1">
        <name>Zn(2+)</name>
        <dbReference type="ChEBI" id="CHEBI:29105"/>
    </cofactor>
    <text evidence="1">Binds 1 zinc ion per subunit.</text>
</comment>
<comment type="similarity">
    <text evidence="1">Belongs to the metallo-dependent hydrolases superfamily. Adenosine and AMP deaminases family. Adenosine deaminase subfamily.</text>
</comment>
<protein>
    <recommendedName>
        <fullName evidence="1">Adenosine deaminase</fullName>
        <ecNumber evidence="1">3.5.4.4</ecNumber>
    </recommendedName>
    <alternativeName>
        <fullName evidence="1">Adenosine aminohydrolase</fullName>
    </alternativeName>
</protein>
<gene>
    <name evidence="1" type="primary">add</name>
    <name type="ordered locus">ECH74115_2335</name>
</gene>
<sequence length="333" mass="36401">MIDTTLPLTDIHRHLDGNIRPQTILELGRQYNISLPAQSLETLIPHVQVIANEPDLVSFLTKLDWGVKVLASLDACRRVAFENIEDAARNGLHYVELRFSPGYMAMAHQLPVAGVVEAVIDGVREGCRTFGVQAKLIGIMSRTFGEAACQQELEAFLAHRDQITALDLAGDELGFPGSLFLSHFNRARDAGWHITVHAGEAAGPESIWQAIRELGAERIGHGVKAIEDRALMDFLAEQQIGIESCLTSNIQTSTVAELAAHPLKTFLEHGIRASINTDDPGVQGVDIIHEYTVAAPAAGLSREQIRQAQINGLEMAFLNAEEKRALREKVAAK</sequence>